<protein>
    <recommendedName>
        <fullName evidence="1">Tryptophan synthase alpha chain</fullName>
        <ecNumber evidence="1">4.2.1.20</ecNumber>
    </recommendedName>
</protein>
<keyword id="KW-0028">Amino-acid biosynthesis</keyword>
<keyword id="KW-0057">Aromatic amino acid biosynthesis</keyword>
<keyword id="KW-0456">Lyase</keyword>
<keyword id="KW-0822">Tryptophan biosynthesis</keyword>
<dbReference type="EC" id="4.2.1.20" evidence="1"/>
<dbReference type="EMBL" id="CP000459">
    <property type="protein sequence ID" value="ABK10697.1"/>
    <property type="molecule type" value="Genomic_DNA"/>
</dbReference>
<dbReference type="RefSeq" id="WP_011548089.1">
    <property type="nucleotide sequence ID" value="NC_008543.1"/>
</dbReference>
<dbReference type="SMR" id="A0AZ71"/>
<dbReference type="GeneID" id="83050343"/>
<dbReference type="KEGG" id="bch:Bcen2424_3960"/>
<dbReference type="HOGENOM" id="CLU_016734_0_0_4"/>
<dbReference type="UniPathway" id="UPA00035">
    <property type="reaction ID" value="UER00044"/>
</dbReference>
<dbReference type="GO" id="GO:0005829">
    <property type="term" value="C:cytosol"/>
    <property type="evidence" value="ECO:0007669"/>
    <property type="project" value="TreeGrafter"/>
</dbReference>
<dbReference type="GO" id="GO:0004834">
    <property type="term" value="F:tryptophan synthase activity"/>
    <property type="evidence" value="ECO:0007669"/>
    <property type="project" value="UniProtKB-UniRule"/>
</dbReference>
<dbReference type="CDD" id="cd04724">
    <property type="entry name" value="Tryptophan_synthase_alpha"/>
    <property type="match status" value="1"/>
</dbReference>
<dbReference type="FunFam" id="3.20.20.70:FF:000037">
    <property type="entry name" value="Tryptophan synthase alpha chain"/>
    <property type="match status" value="1"/>
</dbReference>
<dbReference type="Gene3D" id="3.20.20.70">
    <property type="entry name" value="Aldolase class I"/>
    <property type="match status" value="1"/>
</dbReference>
<dbReference type="HAMAP" id="MF_00131">
    <property type="entry name" value="Trp_synth_alpha"/>
    <property type="match status" value="1"/>
</dbReference>
<dbReference type="InterPro" id="IPR013785">
    <property type="entry name" value="Aldolase_TIM"/>
</dbReference>
<dbReference type="InterPro" id="IPR011060">
    <property type="entry name" value="RibuloseP-bd_barrel"/>
</dbReference>
<dbReference type="InterPro" id="IPR018204">
    <property type="entry name" value="Trp_synthase_alpha_AS"/>
</dbReference>
<dbReference type="InterPro" id="IPR002028">
    <property type="entry name" value="Trp_synthase_suA"/>
</dbReference>
<dbReference type="NCBIfam" id="TIGR00262">
    <property type="entry name" value="trpA"/>
    <property type="match status" value="1"/>
</dbReference>
<dbReference type="PANTHER" id="PTHR43406:SF1">
    <property type="entry name" value="TRYPTOPHAN SYNTHASE ALPHA CHAIN, CHLOROPLASTIC"/>
    <property type="match status" value="1"/>
</dbReference>
<dbReference type="PANTHER" id="PTHR43406">
    <property type="entry name" value="TRYPTOPHAN SYNTHASE, ALPHA CHAIN"/>
    <property type="match status" value="1"/>
</dbReference>
<dbReference type="Pfam" id="PF00290">
    <property type="entry name" value="Trp_syntA"/>
    <property type="match status" value="1"/>
</dbReference>
<dbReference type="SUPFAM" id="SSF51366">
    <property type="entry name" value="Ribulose-phoshate binding barrel"/>
    <property type="match status" value="1"/>
</dbReference>
<dbReference type="PROSITE" id="PS00167">
    <property type="entry name" value="TRP_SYNTHASE_ALPHA"/>
    <property type="match status" value="1"/>
</dbReference>
<gene>
    <name evidence="1" type="primary">trpA</name>
    <name type="ordered locus">Bcen2424_3960</name>
</gene>
<name>TRPA_BURCH</name>
<organism>
    <name type="scientific">Burkholderia cenocepacia (strain HI2424)</name>
    <dbReference type="NCBI Taxonomy" id="331272"/>
    <lineage>
        <taxon>Bacteria</taxon>
        <taxon>Pseudomonadati</taxon>
        <taxon>Pseudomonadota</taxon>
        <taxon>Betaproteobacteria</taxon>
        <taxon>Burkholderiales</taxon>
        <taxon>Burkholderiaceae</taxon>
        <taxon>Burkholderia</taxon>
        <taxon>Burkholderia cepacia complex</taxon>
    </lineage>
</organism>
<sequence>MNRIKQTFAALAEQGRKGLIPFITAGDPDPAKTVEFMHALAAGGADVIELGVPFSDPMADGPVIQRSSERALARGVTLKSVLADVKRFRETDPKTPVVLMGYANPIERMGVDAFAAEAHAAGVDGVLVVDYPPEEAGVFAEKMRAAQIDPIFLLAPTSTDERIADVGKIASGYVYYVSLKGVTGAGNLDVSSIAGKIPAIKSRVPVPVGVGFGIRDAETARAVAEVSDAVVIGSRLVQLLESAAPEGAAAALKTFIAELRAALDGAGNTAR</sequence>
<evidence type="ECO:0000255" key="1">
    <source>
        <dbReference type="HAMAP-Rule" id="MF_00131"/>
    </source>
</evidence>
<comment type="function">
    <text evidence="1">The alpha subunit is responsible for the aldol cleavage of indoleglycerol phosphate to indole and glyceraldehyde 3-phosphate.</text>
</comment>
<comment type="catalytic activity">
    <reaction evidence="1">
        <text>(1S,2R)-1-C-(indol-3-yl)glycerol 3-phosphate + L-serine = D-glyceraldehyde 3-phosphate + L-tryptophan + H2O</text>
        <dbReference type="Rhea" id="RHEA:10532"/>
        <dbReference type="ChEBI" id="CHEBI:15377"/>
        <dbReference type="ChEBI" id="CHEBI:33384"/>
        <dbReference type="ChEBI" id="CHEBI:57912"/>
        <dbReference type="ChEBI" id="CHEBI:58866"/>
        <dbReference type="ChEBI" id="CHEBI:59776"/>
        <dbReference type="EC" id="4.2.1.20"/>
    </reaction>
</comment>
<comment type="pathway">
    <text evidence="1">Amino-acid biosynthesis; L-tryptophan biosynthesis; L-tryptophan from chorismate: step 5/5.</text>
</comment>
<comment type="subunit">
    <text evidence="1">Tetramer of two alpha and two beta chains.</text>
</comment>
<comment type="similarity">
    <text evidence="1">Belongs to the TrpA family.</text>
</comment>
<proteinExistence type="inferred from homology"/>
<feature type="chain" id="PRO_1000018174" description="Tryptophan synthase alpha chain">
    <location>
        <begin position="1"/>
        <end position="271"/>
    </location>
</feature>
<feature type="active site" description="Proton acceptor" evidence="1">
    <location>
        <position position="49"/>
    </location>
</feature>
<feature type="active site" description="Proton acceptor" evidence="1">
    <location>
        <position position="60"/>
    </location>
</feature>
<reference key="1">
    <citation type="submission" date="2006-08" db="EMBL/GenBank/DDBJ databases">
        <title>Complete sequence of chromosome 2 of Burkholderia cenocepacia HI2424.</title>
        <authorList>
            <person name="Copeland A."/>
            <person name="Lucas S."/>
            <person name="Lapidus A."/>
            <person name="Barry K."/>
            <person name="Detter J.C."/>
            <person name="Glavina del Rio T."/>
            <person name="Hammon N."/>
            <person name="Israni S."/>
            <person name="Pitluck S."/>
            <person name="Chain P."/>
            <person name="Malfatti S."/>
            <person name="Shin M."/>
            <person name="Vergez L."/>
            <person name="Schmutz J."/>
            <person name="Larimer F."/>
            <person name="Land M."/>
            <person name="Hauser L."/>
            <person name="Kyrpides N."/>
            <person name="Kim E."/>
            <person name="LiPuma J.J."/>
            <person name="Gonzalez C.F."/>
            <person name="Konstantinidis K."/>
            <person name="Tiedje J.M."/>
            <person name="Richardson P."/>
        </authorList>
    </citation>
    <scope>NUCLEOTIDE SEQUENCE [LARGE SCALE GENOMIC DNA]</scope>
    <source>
        <strain>HI2424</strain>
    </source>
</reference>
<accession>A0AZ71</accession>